<evidence type="ECO:0000255" key="1">
    <source>
        <dbReference type="HAMAP-Rule" id="MF_02012"/>
    </source>
</evidence>
<proteinExistence type="inferred from homology"/>
<organism>
    <name type="scientific">Yersinia pestis bv. Antiqua (strain Angola)</name>
    <dbReference type="NCBI Taxonomy" id="349746"/>
    <lineage>
        <taxon>Bacteria</taxon>
        <taxon>Pseudomonadati</taxon>
        <taxon>Pseudomonadota</taxon>
        <taxon>Gammaproteobacteria</taxon>
        <taxon>Enterobacterales</taxon>
        <taxon>Yersiniaceae</taxon>
        <taxon>Yersinia</taxon>
    </lineage>
</organism>
<sequence>MSAQPVDIQVFGRSLRVNCPPEQQDALNMAAEDLSQRLQDLKVRTRVNNTEQLVFIAALNVCHELAQERLKTRDYASNMEQRIRMLQQTIEQALLEQGRISDRQDTQFE</sequence>
<gene>
    <name evidence="1" type="primary">zapA</name>
    <name type="ordered locus">YpAngola_A3825</name>
</gene>
<keyword id="KW-0131">Cell cycle</keyword>
<keyword id="KW-0132">Cell division</keyword>
<keyword id="KW-0175">Coiled coil</keyword>
<keyword id="KW-0963">Cytoplasm</keyword>
<keyword id="KW-0717">Septation</keyword>
<reference key="1">
    <citation type="journal article" date="2010" name="J. Bacteriol.">
        <title>Genome sequence of the deep-rooted Yersinia pestis strain Angola reveals new insights into the evolution and pangenome of the plague bacterium.</title>
        <authorList>
            <person name="Eppinger M."/>
            <person name="Worsham P.L."/>
            <person name="Nikolich M.P."/>
            <person name="Riley D.R."/>
            <person name="Sebastian Y."/>
            <person name="Mou S."/>
            <person name="Achtman M."/>
            <person name="Lindler L.E."/>
            <person name="Ravel J."/>
        </authorList>
    </citation>
    <scope>NUCLEOTIDE SEQUENCE [LARGE SCALE GENOMIC DNA]</scope>
    <source>
        <strain>Angola</strain>
    </source>
</reference>
<accession>A9R4K1</accession>
<protein>
    <recommendedName>
        <fullName evidence="1">Cell division protein ZapA</fullName>
    </recommendedName>
    <alternativeName>
        <fullName evidence="1">Z ring-associated protein ZapA</fullName>
    </alternativeName>
</protein>
<name>ZAPA_YERPG</name>
<dbReference type="EMBL" id="CP000901">
    <property type="protein sequence ID" value="ABX85992.1"/>
    <property type="molecule type" value="Genomic_DNA"/>
</dbReference>
<dbReference type="RefSeq" id="WP_002209954.1">
    <property type="nucleotide sequence ID" value="NZ_CP009935.1"/>
</dbReference>
<dbReference type="SMR" id="A9R4K1"/>
<dbReference type="GeneID" id="96662508"/>
<dbReference type="KEGG" id="ypg:YpAngola_A3825"/>
<dbReference type="PATRIC" id="fig|349746.12.peg.541"/>
<dbReference type="GO" id="GO:0032153">
    <property type="term" value="C:cell division site"/>
    <property type="evidence" value="ECO:0007669"/>
    <property type="project" value="TreeGrafter"/>
</dbReference>
<dbReference type="GO" id="GO:0030428">
    <property type="term" value="C:cell septum"/>
    <property type="evidence" value="ECO:0007669"/>
    <property type="project" value="TreeGrafter"/>
</dbReference>
<dbReference type="GO" id="GO:0005829">
    <property type="term" value="C:cytosol"/>
    <property type="evidence" value="ECO:0007669"/>
    <property type="project" value="TreeGrafter"/>
</dbReference>
<dbReference type="GO" id="GO:0005886">
    <property type="term" value="C:plasma membrane"/>
    <property type="evidence" value="ECO:0007669"/>
    <property type="project" value="UniProtKB-UniRule"/>
</dbReference>
<dbReference type="GO" id="GO:0000917">
    <property type="term" value="P:division septum assembly"/>
    <property type="evidence" value="ECO:0007669"/>
    <property type="project" value="UniProtKB-KW"/>
</dbReference>
<dbReference type="GO" id="GO:0043093">
    <property type="term" value="P:FtsZ-dependent cytokinesis"/>
    <property type="evidence" value="ECO:0007669"/>
    <property type="project" value="TreeGrafter"/>
</dbReference>
<dbReference type="GO" id="GO:0000921">
    <property type="term" value="P:septin ring assembly"/>
    <property type="evidence" value="ECO:0007669"/>
    <property type="project" value="TreeGrafter"/>
</dbReference>
<dbReference type="FunFam" id="1.20.5.50:FF:000001">
    <property type="entry name" value="Cell division protein ZapA"/>
    <property type="match status" value="1"/>
</dbReference>
<dbReference type="FunFam" id="3.30.160.880:FF:000001">
    <property type="entry name" value="Cell division protein ZapA"/>
    <property type="match status" value="1"/>
</dbReference>
<dbReference type="Gene3D" id="1.20.5.50">
    <property type="match status" value="1"/>
</dbReference>
<dbReference type="Gene3D" id="3.30.160.880">
    <property type="entry name" value="Cell division protein ZapA protomer, N-terminal domain"/>
    <property type="match status" value="1"/>
</dbReference>
<dbReference type="HAMAP" id="MF_02012">
    <property type="entry name" value="ZapA_type1"/>
    <property type="match status" value="1"/>
</dbReference>
<dbReference type="InterPro" id="IPR007838">
    <property type="entry name" value="Cell_div_ZapA-like"/>
</dbReference>
<dbReference type="InterPro" id="IPR036192">
    <property type="entry name" value="Cell_div_ZapA-like_sf"/>
</dbReference>
<dbReference type="InterPro" id="IPR023771">
    <property type="entry name" value="Cell_div_ZapA_eubact"/>
</dbReference>
<dbReference type="InterPro" id="IPR042233">
    <property type="entry name" value="Cell_div_ZapA_N"/>
</dbReference>
<dbReference type="NCBIfam" id="NF008209">
    <property type="entry name" value="PRK10972.1"/>
    <property type="match status" value="1"/>
</dbReference>
<dbReference type="PANTHER" id="PTHR34981">
    <property type="entry name" value="CELL DIVISION PROTEIN ZAPA"/>
    <property type="match status" value="1"/>
</dbReference>
<dbReference type="PANTHER" id="PTHR34981:SF1">
    <property type="entry name" value="CELL DIVISION PROTEIN ZAPA"/>
    <property type="match status" value="1"/>
</dbReference>
<dbReference type="Pfam" id="PF05164">
    <property type="entry name" value="ZapA"/>
    <property type="match status" value="1"/>
</dbReference>
<dbReference type="SUPFAM" id="SSF102829">
    <property type="entry name" value="Cell division protein ZapA-like"/>
    <property type="match status" value="1"/>
</dbReference>
<feature type="chain" id="PRO_0000345667" description="Cell division protein ZapA">
    <location>
        <begin position="1"/>
        <end position="109"/>
    </location>
</feature>
<feature type="coiled-coil region" evidence="1">
    <location>
        <begin position="22"/>
        <end position="99"/>
    </location>
</feature>
<comment type="function">
    <text evidence="1">Activator of cell division through the inhibition of FtsZ GTPase activity, therefore promoting FtsZ assembly into bundles of protofilaments necessary for the formation of the division Z ring. It is recruited early at mid-cell but it is not essential for cell division.</text>
</comment>
<comment type="subunit">
    <text evidence="1">Homodimer. Interacts with FtsZ.</text>
</comment>
<comment type="subcellular location">
    <subcellularLocation>
        <location evidence="1">Cytoplasm</location>
    </subcellularLocation>
    <text evidence="1">Localizes at mid-cell.</text>
</comment>
<comment type="similarity">
    <text evidence="1">Belongs to the ZapA family. Type 1 subfamily.</text>
</comment>